<accession>Q09195</accession>
<gene>
    <name evidence="5" type="primary">erg24</name>
    <name type="ORF">SPBC16G5.18</name>
</gene>
<feature type="chain" id="PRO_0000207493" description="Delta(14)-sterol reductase erg24">
    <location>
        <begin position="1"/>
        <end position="424"/>
    </location>
</feature>
<feature type="transmembrane region" description="Helical" evidence="3">
    <location>
        <begin position="19"/>
        <end position="39"/>
    </location>
</feature>
<feature type="transmembrane region" description="Helical" evidence="3">
    <location>
        <begin position="112"/>
        <end position="132"/>
    </location>
</feature>
<feature type="transmembrane region" description="Helical" evidence="3">
    <location>
        <begin position="370"/>
        <end position="390"/>
    </location>
</feature>
<feature type="binding site" evidence="1">
    <location>
        <position position="317"/>
    </location>
    <ligand>
        <name>NADP(+)</name>
        <dbReference type="ChEBI" id="CHEBI:58349"/>
    </ligand>
</feature>
<feature type="binding site" evidence="1">
    <location>
        <position position="321"/>
    </location>
    <ligand>
        <name>NADP(+)</name>
        <dbReference type="ChEBI" id="CHEBI:58349"/>
    </ligand>
</feature>
<feature type="binding site" evidence="1">
    <location>
        <position position="344"/>
    </location>
    <ligand>
        <name>NADP(+)</name>
        <dbReference type="ChEBI" id="CHEBI:58349"/>
    </ligand>
</feature>
<feature type="binding site" evidence="1">
    <location>
        <position position="349"/>
    </location>
    <ligand>
        <name>NADP(+)</name>
        <dbReference type="ChEBI" id="CHEBI:58349"/>
    </ligand>
</feature>
<feature type="binding site" evidence="1">
    <location>
        <begin position="356"/>
        <end position="357"/>
    </location>
    <ligand>
        <name>NADP(+)</name>
        <dbReference type="ChEBI" id="CHEBI:58349"/>
    </ligand>
</feature>
<feature type="binding site" evidence="1">
    <location>
        <position position="396"/>
    </location>
    <ligand>
        <name>NADP(+)</name>
        <dbReference type="ChEBI" id="CHEBI:58349"/>
    </ligand>
</feature>
<feature type="binding site" evidence="1">
    <location>
        <begin position="400"/>
        <end position="404"/>
    </location>
    <ligand>
        <name>NADP(+)</name>
        <dbReference type="ChEBI" id="CHEBI:58349"/>
    </ligand>
</feature>
<feature type="binding site" evidence="1">
    <location>
        <position position="411"/>
    </location>
    <ligand>
        <name>NADP(+)</name>
        <dbReference type="ChEBI" id="CHEBI:58349"/>
    </ligand>
</feature>
<protein>
    <recommendedName>
        <fullName evidence="5">Delta(14)-sterol reductase erg24</fullName>
        <ecNumber evidence="2">1.3.1.70</ecNumber>
    </recommendedName>
    <alternativeName>
        <fullName evidence="5">C-14 sterol reductase erg24</fullName>
    </alternativeName>
    <alternativeName>
        <fullName evidence="2">Ergosterol biosynthetic protein 24</fullName>
    </alternativeName>
    <alternativeName>
        <fullName evidence="2">Sterol C14-reductase erg24</fullName>
    </alternativeName>
</protein>
<name>ERG24_SCHPO</name>
<sequence>MAKGAVKKEKFEYEFFGPIGALGVTVLTTVVSFGSFYICNEEGCPAKFSKISHIFKKTPLFDQKSLILYLLWFSTLTLLWKCTNGKWAKGTPIDDKGTRLLYKINGFNSACLILGVVCTSIYLLGASCMEFIWDNFLQLMFAAYVFSVVLCTFCYVQSFFGKQQLAKGGTSGNILFDWFIGRSLNPRIGNFDIKCFCELRPGLILWVVFDIAFACHQYLVLGGRITDSMVLVIIFHTWYVLDSLINESAVLTTMDITTDGFGYMLSFGDLVWVPFLYSLQARYLAFHPVDLGLVKTLAILCLQFLGYYIFRGANGQKNRFRSNPNDPKLKHLKFIQTKRGTKLLTSGWWGMARHINYFGDWIMAWAWCLPAGFGSPIPYFYVAYFGVLLVHRNARDDHKCRVKYGEDWEKYCKAVKYRIIPYVY</sequence>
<dbReference type="EC" id="1.3.1.70" evidence="2"/>
<dbReference type="EMBL" id="L36039">
    <property type="protein sequence ID" value="AAA74121.1"/>
    <property type="molecule type" value="mRNA"/>
</dbReference>
<dbReference type="EMBL" id="CU329671">
    <property type="protein sequence ID" value="CAA19037.1"/>
    <property type="molecule type" value="Genomic_DNA"/>
</dbReference>
<dbReference type="PIR" id="JC4057">
    <property type="entry name" value="JC4057"/>
</dbReference>
<dbReference type="RefSeq" id="NP_596767.1">
    <property type="nucleotide sequence ID" value="NM_001023787.2"/>
</dbReference>
<dbReference type="SMR" id="Q09195"/>
<dbReference type="BioGRID" id="276650">
    <property type="interactions" value="3"/>
</dbReference>
<dbReference type="FunCoup" id="Q09195">
    <property type="interactions" value="173"/>
</dbReference>
<dbReference type="STRING" id="284812.Q09195"/>
<dbReference type="PaxDb" id="4896-SPBC16G5.18.1"/>
<dbReference type="EnsemblFungi" id="SPBC16G5.18.1">
    <property type="protein sequence ID" value="SPBC16G5.18.1:pep"/>
    <property type="gene ID" value="SPBC16G5.18"/>
</dbReference>
<dbReference type="GeneID" id="2540113"/>
<dbReference type="KEGG" id="spo:2540113"/>
<dbReference type="PomBase" id="SPBC16G5.18">
    <property type="gene designation" value="erg24"/>
</dbReference>
<dbReference type="VEuPathDB" id="FungiDB:SPBC16G5.18"/>
<dbReference type="eggNOG" id="KOG1435">
    <property type="taxonomic scope" value="Eukaryota"/>
</dbReference>
<dbReference type="HOGENOM" id="CLU_015631_0_3_1"/>
<dbReference type="InParanoid" id="Q09195"/>
<dbReference type="OMA" id="PNYMGDL"/>
<dbReference type="PhylomeDB" id="Q09195"/>
<dbReference type="Reactome" id="R-SPO-191273">
    <property type="pathway name" value="Cholesterol biosynthesis"/>
</dbReference>
<dbReference type="Reactome" id="R-SPO-2995383">
    <property type="pathway name" value="Initiation of Nuclear Envelope (NE) Reformation"/>
</dbReference>
<dbReference type="Reactome" id="R-SPO-9013106">
    <property type="pathway name" value="RHOC GTPase cycle"/>
</dbReference>
<dbReference type="Reactome" id="R-SPO-9013405">
    <property type="pathway name" value="RHOD GTPase cycle"/>
</dbReference>
<dbReference type="UniPathway" id="UPA00768"/>
<dbReference type="UniPathway" id="UPA00770">
    <property type="reaction ID" value="UER00755"/>
</dbReference>
<dbReference type="PRO" id="PR:Q09195"/>
<dbReference type="Proteomes" id="UP000002485">
    <property type="component" value="Chromosome II"/>
</dbReference>
<dbReference type="GO" id="GO:0005783">
    <property type="term" value="C:endoplasmic reticulum"/>
    <property type="evidence" value="ECO:0007005"/>
    <property type="project" value="PomBase"/>
</dbReference>
<dbReference type="GO" id="GO:0005789">
    <property type="term" value="C:endoplasmic reticulum membrane"/>
    <property type="evidence" value="ECO:0000318"/>
    <property type="project" value="GO_Central"/>
</dbReference>
<dbReference type="GO" id="GO:0050613">
    <property type="term" value="F:Delta14-sterol reductase activity"/>
    <property type="evidence" value="ECO:0000318"/>
    <property type="project" value="GO_Central"/>
</dbReference>
<dbReference type="GO" id="GO:0050661">
    <property type="term" value="F:NADP binding"/>
    <property type="evidence" value="ECO:0000250"/>
    <property type="project" value="UniProtKB"/>
</dbReference>
<dbReference type="GO" id="GO:0006696">
    <property type="term" value="P:ergosterol biosynthetic process"/>
    <property type="evidence" value="ECO:0000318"/>
    <property type="project" value="GO_Central"/>
</dbReference>
<dbReference type="FunFam" id="1.20.120.1630:FF:000008">
    <property type="entry name" value="C-14 sterol reductase"/>
    <property type="match status" value="1"/>
</dbReference>
<dbReference type="Gene3D" id="1.20.120.1630">
    <property type="match status" value="1"/>
</dbReference>
<dbReference type="InterPro" id="IPR001171">
    <property type="entry name" value="ERG24_DHCR-like"/>
</dbReference>
<dbReference type="InterPro" id="IPR018083">
    <property type="entry name" value="Sterol_reductase_CS"/>
</dbReference>
<dbReference type="PANTHER" id="PTHR21257">
    <property type="entry name" value="DELTA(14)-STEROL REDUCTASE"/>
    <property type="match status" value="1"/>
</dbReference>
<dbReference type="PANTHER" id="PTHR21257:SF52">
    <property type="entry name" value="DELTA(14)-STEROL REDUCTASE TM7SF2"/>
    <property type="match status" value="1"/>
</dbReference>
<dbReference type="Pfam" id="PF01222">
    <property type="entry name" value="ERG4_ERG24"/>
    <property type="match status" value="1"/>
</dbReference>
<dbReference type="PROSITE" id="PS01017">
    <property type="entry name" value="STEROL_REDUCT_1"/>
    <property type="match status" value="1"/>
</dbReference>
<dbReference type="PROSITE" id="PS01018">
    <property type="entry name" value="STEROL_REDUCT_2"/>
    <property type="match status" value="1"/>
</dbReference>
<evidence type="ECO:0000250" key="1">
    <source>
        <dbReference type="UniProtKB" id="G4SW86"/>
    </source>
</evidence>
<evidence type="ECO:0000250" key="2">
    <source>
        <dbReference type="UniProtKB" id="P32462"/>
    </source>
</evidence>
<evidence type="ECO:0000255" key="3"/>
<evidence type="ECO:0000269" key="4">
    <source>
    </source>
</evidence>
<evidence type="ECO:0000303" key="5">
    <source>
    </source>
</evidence>
<evidence type="ECO:0000305" key="6"/>
<evidence type="ECO:0000305" key="7">
    <source>
    </source>
</evidence>
<evidence type="ECO:0000305" key="8">
    <source>
    </source>
</evidence>
<comment type="function">
    <text evidence="2 7 8">Delta(14)-sterol reductase; part of the third module of ergosterol biosynthesis pathway that includes by the late steps of the pathway (By similarity). Erg24 reduces the C14=C15 double bond of 4,4-dimethyl-cholesta-8,14,24-trienol to produce 4,4-dimethyl-cholesta-8,24-dienol (By similarity). The third module or late pathway involves the ergosterol synthesis itself through consecutive reactions that mainly occur in the endoplasmic reticulum (ER) membrane. Firstly, the squalene synthase erg9 catalyzes the condensation of 2 farnesyl pyrophosphate moieties to form squalene, which is the precursor of all steroids. Secondly, squalene is converted into lanosterol by the consecutive action of the squalene epoxidase erg1 and the lanosterol synthase erg7. The lanosterol 14-alpha-demethylase erg11/cyp1 catalyzes C14-demethylation of lanosterol to produce 4,4'-dimethyl cholesta-8,14,24-triene-3-beta-ol. In the next steps, a complex process involving various demethylation, reduction and desaturation reactions catalyzed by the C-14 reductase erg24 and the C-4 demethylation complex erg25-erg26-erg27 leads to the production of zymosterol. Erg28 likely functions in the C-4 demethylation complex reaction by tethering erg26 and Erg27 to the endoplasmic reticulum or to facilitate interaction between these proteins. Then, the sterol 24-C-methyltransferase erg6 catalyzes the methyl transfer from S-adenosyl-methionine to the C-24 of zymosterol to form fecosterol. The C-8 sterol isomerase erg2 catalyzes the reaction which results in unsaturation at C-7 in the B ring of sterols and thus converts fecosterol to episterol. The sterol-C5-desaturases erg31 and erg32 then catalyze the introduction of a C-5 double bond in the B ring to produce 5-dehydroepisterol. The C-22 sterol desaturase erg5 further converts 5-dehydroepisterol into ergosta-5,7,22,24(28)-tetraen-3beta-ol by forming the C-22(23) double bond in the sterol side chain. Finally, ergosta-5,7,22,24(28)-tetraen-3beta-ol is substrate of the C-24(28) sterol reductase erg4 to produce ergosterol (Probable) (PubMed:18310029). In the genus Schizosaccharomyces, a second route exists between lanosterol and fecosterol, via the methylation of lanosterol to eburicol by erg6, followed by C14-demethylation by erg11/cyp1 and C4-demethylation by the demethylation complex erg25-erg26-erg27 (Probable) (PubMed:8586261).</text>
</comment>
<comment type="catalytic activity">
    <reaction evidence="2">
        <text>4,4-dimethyl-5alpha-cholesta-8,24-dien-3beta-ol + NADP(+) = 4,4-dimethyl-5alpha-cholesta-8,14,24-trien-3beta-ol + NADPH + H(+)</text>
        <dbReference type="Rhea" id="RHEA:18561"/>
        <dbReference type="ChEBI" id="CHEBI:15378"/>
        <dbReference type="ChEBI" id="CHEBI:17813"/>
        <dbReference type="ChEBI" id="CHEBI:18364"/>
        <dbReference type="ChEBI" id="CHEBI:57783"/>
        <dbReference type="ChEBI" id="CHEBI:58349"/>
        <dbReference type="EC" id="1.3.1.70"/>
    </reaction>
    <physiologicalReaction direction="right-to-left" evidence="2">
        <dbReference type="Rhea" id="RHEA:18563"/>
    </physiologicalReaction>
</comment>
<comment type="pathway">
    <text evidence="2">Steroid biosynthesis; zymosterol biosynthesis; zymosterol from lanosterol: step 2/6.</text>
</comment>
<comment type="pathway">
    <text evidence="2">Steroid metabolism; ergosterol biosynthesis.</text>
</comment>
<comment type="subcellular location">
    <subcellularLocation>
        <location evidence="6">Endoplasmic reticulum membrane</location>
        <topology evidence="3">Multi-pass membrane protein</topology>
    </subcellularLocation>
</comment>
<comment type="miscellaneous">
    <text evidence="4">In Aspergillus, the biosynthesis pathway of the sterol precursors leading to the prevalent sterol ergosterol differs from yeast. The ringsystem of lanosterol in S.cerevisiae is firstly demethylised in three enzymatic steps leading to the intermediate zymosterol and secondly a methyl group is added to zymosterol by the sterol 24-C-methyltransferase to form fecosterol. In Aspergillus, lanosterol is firstly transmethylated by the sterol 24-C-methyltransferase leading to the intermediate eburicol and secondly demethylated in three steps to form fecosterol. In the genus Schizosaccharomyces, 2 routes exist from lanosterol to erposterol: the classical one via zymosterol and the second one via the formation of eburicol followed by demethylation.</text>
</comment>
<comment type="similarity">
    <text evidence="6">Belongs to the ERG4/ERG24 family.</text>
</comment>
<proteinExistence type="evidence at transcript level"/>
<keyword id="KW-0256">Endoplasmic reticulum</keyword>
<keyword id="KW-0444">Lipid biosynthesis</keyword>
<keyword id="KW-0443">Lipid metabolism</keyword>
<keyword id="KW-0472">Membrane</keyword>
<keyword id="KW-0521">NADP</keyword>
<keyword id="KW-0560">Oxidoreductase</keyword>
<keyword id="KW-1185">Reference proteome</keyword>
<keyword id="KW-0752">Steroid biosynthesis</keyword>
<keyword id="KW-0753">Steroid metabolism</keyword>
<keyword id="KW-0756">Sterol biosynthesis</keyword>
<keyword id="KW-1207">Sterol metabolism</keyword>
<keyword id="KW-0812">Transmembrane</keyword>
<keyword id="KW-1133">Transmembrane helix</keyword>
<organism>
    <name type="scientific">Schizosaccharomyces pombe (strain 972 / ATCC 24843)</name>
    <name type="common">Fission yeast</name>
    <dbReference type="NCBI Taxonomy" id="284812"/>
    <lineage>
        <taxon>Eukaryota</taxon>
        <taxon>Fungi</taxon>
        <taxon>Dikarya</taxon>
        <taxon>Ascomycota</taxon>
        <taxon>Taphrinomycotina</taxon>
        <taxon>Schizosaccharomycetes</taxon>
        <taxon>Schizosaccharomycetales</taxon>
        <taxon>Schizosaccharomycetaceae</taxon>
        <taxon>Schizosaccharomyces</taxon>
    </lineage>
</organism>
<reference key="1">
    <citation type="journal article" date="1995" name="Gene">
        <title>Cloning and sequence analysis of an ERG24 homolog from Schizosaccharomyces pombe.</title>
        <authorList>
            <person name="Smith S."/>
        </authorList>
    </citation>
    <scope>NUCLEOTIDE SEQUENCE [MRNA]</scope>
    <source>
        <strain>SP66</strain>
    </source>
</reference>
<reference key="2">
    <citation type="journal article" date="2002" name="Nature">
        <title>The genome sequence of Schizosaccharomyces pombe.</title>
        <authorList>
            <person name="Wood V."/>
            <person name="Gwilliam R."/>
            <person name="Rajandream M.A."/>
            <person name="Lyne M.H."/>
            <person name="Lyne R."/>
            <person name="Stewart A."/>
            <person name="Sgouros J.G."/>
            <person name="Peat N."/>
            <person name="Hayles J."/>
            <person name="Baker S.G."/>
            <person name="Basham D."/>
            <person name="Bowman S."/>
            <person name="Brooks K."/>
            <person name="Brown D."/>
            <person name="Brown S."/>
            <person name="Chillingworth T."/>
            <person name="Churcher C.M."/>
            <person name="Collins M."/>
            <person name="Connor R."/>
            <person name="Cronin A."/>
            <person name="Davis P."/>
            <person name="Feltwell T."/>
            <person name="Fraser A."/>
            <person name="Gentles S."/>
            <person name="Goble A."/>
            <person name="Hamlin N."/>
            <person name="Harris D.E."/>
            <person name="Hidalgo J."/>
            <person name="Hodgson G."/>
            <person name="Holroyd S."/>
            <person name="Hornsby T."/>
            <person name="Howarth S."/>
            <person name="Huckle E.J."/>
            <person name="Hunt S."/>
            <person name="Jagels K."/>
            <person name="James K.D."/>
            <person name="Jones L."/>
            <person name="Jones M."/>
            <person name="Leather S."/>
            <person name="McDonald S."/>
            <person name="McLean J."/>
            <person name="Mooney P."/>
            <person name="Moule S."/>
            <person name="Mungall K.L."/>
            <person name="Murphy L.D."/>
            <person name="Niblett D."/>
            <person name="Odell C."/>
            <person name="Oliver K."/>
            <person name="O'Neil S."/>
            <person name="Pearson D."/>
            <person name="Quail M.A."/>
            <person name="Rabbinowitsch E."/>
            <person name="Rutherford K.M."/>
            <person name="Rutter S."/>
            <person name="Saunders D."/>
            <person name="Seeger K."/>
            <person name="Sharp S."/>
            <person name="Skelton J."/>
            <person name="Simmonds M.N."/>
            <person name="Squares R."/>
            <person name="Squares S."/>
            <person name="Stevens K."/>
            <person name="Taylor K."/>
            <person name="Taylor R.G."/>
            <person name="Tivey A."/>
            <person name="Walsh S.V."/>
            <person name="Warren T."/>
            <person name="Whitehead S."/>
            <person name="Woodward J.R."/>
            <person name="Volckaert G."/>
            <person name="Aert R."/>
            <person name="Robben J."/>
            <person name="Grymonprez B."/>
            <person name="Weltjens I."/>
            <person name="Vanstreels E."/>
            <person name="Rieger M."/>
            <person name="Schaefer M."/>
            <person name="Mueller-Auer S."/>
            <person name="Gabel C."/>
            <person name="Fuchs M."/>
            <person name="Duesterhoeft A."/>
            <person name="Fritzc C."/>
            <person name="Holzer E."/>
            <person name="Moestl D."/>
            <person name="Hilbert H."/>
            <person name="Borzym K."/>
            <person name="Langer I."/>
            <person name="Beck A."/>
            <person name="Lehrach H."/>
            <person name="Reinhardt R."/>
            <person name="Pohl T.M."/>
            <person name="Eger P."/>
            <person name="Zimmermann W."/>
            <person name="Wedler H."/>
            <person name="Wambutt R."/>
            <person name="Purnelle B."/>
            <person name="Goffeau A."/>
            <person name="Cadieu E."/>
            <person name="Dreano S."/>
            <person name="Gloux S."/>
            <person name="Lelaure V."/>
            <person name="Mottier S."/>
            <person name="Galibert F."/>
            <person name="Aves S.J."/>
            <person name="Xiang Z."/>
            <person name="Hunt C."/>
            <person name="Moore K."/>
            <person name="Hurst S.M."/>
            <person name="Lucas M."/>
            <person name="Rochet M."/>
            <person name="Gaillardin C."/>
            <person name="Tallada V.A."/>
            <person name="Garzon A."/>
            <person name="Thode G."/>
            <person name="Daga R.R."/>
            <person name="Cruzado L."/>
            <person name="Jimenez J."/>
            <person name="Sanchez M."/>
            <person name="del Rey F."/>
            <person name="Benito J."/>
            <person name="Dominguez A."/>
            <person name="Revuelta J.L."/>
            <person name="Moreno S."/>
            <person name="Armstrong J."/>
            <person name="Forsburg S.L."/>
            <person name="Cerutti L."/>
            <person name="Lowe T."/>
            <person name="McCombie W.R."/>
            <person name="Paulsen I."/>
            <person name="Potashkin J."/>
            <person name="Shpakovski G.V."/>
            <person name="Ussery D."/>
            <person name="Barrell B.G."/>
            <person name="Nurse P."/>
        </authorList>
    </citation>
    <scope>NUCLEOTIDE SEQUENCE [LARGE SCALE GENOMIC DNA]</scope>
    <source>
        <strain>972 / ATCC 24843</strain>
    </source>
</reference>
<reference key="3">
    <citation type="journal article" date="1995" name="FEMS Microbiol. Lett.">
        <title>Identification of 24-methylene-24,25-dihydrolanosterol as a precursor of ergosterol in the yeasts Schizosaccharomyces pombe and Schizosaccharomyces octosporus.</title>
        <authorList>
            <person name="Harmouch N."/>
            <person name="Coulon J."/>
            <person name="Bonaly R."/>
        </authorList>
    </citation>
    <scope>FUNCTION</scope>
</reference>
<reference key="4">
    <citation type="journal article" date="2008" name="Microbiology">
        <title>Multiple functions of ergosterol in the fission yeast Schizosaccharomyces pombe.</title>
        <authorList>
            <person name="Iwaki T."/>
            <person name="Iefuji H."/>
            <person name="Hiraga Y."/>
            <person name="Hosomi A."/>
            <person name="Morita T."/>
            <person name="Giga-Hama Y."/>
            <person name="Takegawa K."/>
        </authorList>
    </citation>
    <scope>FUNCTION</scope>
</reference>